<dbReference type="EMBL" id="AF378758">
    <property type="protein sequence ID" value="AAL11995.1"/>
    <property type="molecule type" value="mRNA"/>
</dbReference>
<dbReference type="EMBL" id="AF388572">
    <property type="protein sequence ID" value="AAK84664.1"/>
    <property type="molecule type" value="mRNA"/>
</dbReference>
<dbReference type="EMBL" id="AF388573">
    <property type="protein sequence ID" value="AAK84665.1"/>
    <property type="molecule type" value="Genomic_DNA"/>
</dbReference>
<dbReference type="EMBL" id="AK144655">
    <property type="protein sequence ID" value="BAE25992.1"/>
    <property type="molecule type" value="mRNA"/>
</dbReference>
<dbReference type="EMBL" id="BC046318">
    <property type="protein sequence ID" value="AAH46318.1"/>
    <property type="molecule type" value="mRNA"/>
</dbReference>
<dbReference type="CCDS" id="CCDS29448.1"/>
<dbReference type="RefSeq" id="NP_473383.1">
    <property type="nucleotide sequence ID" value="NM_054042.2"/>
</dbReference>
<dbReference type="SMR" id="Q91V98"/>
<dbReference type="BioGRID" id="214055">
    <property type="interactions" value="4"/>
</dbReference>
<dbReference type="FunCoup" id="Q91V98">
    <property type="interactions" value="256"/>
</dbReference>
<dbReference type="STRING" id="10090.ENSMUSP00000070847"/>
<dbReference type="TCDB" id="9.B.87.1.46">
    <property type="family name" value="the selenoprotein p receptor (selp-receptor) family"/>
</dbReference>
<dbReference type="GlyCosmos" id="Q91V98">
    <property type="glycosylation" value="30 sites, No reported glycans"/>
</dbReference>
<dbReference type="GlyGen" id="Q91V98">
    <property type="glycosylation" value="31 sites, 1 N-linked glycan (1 site)"/>
</dbReference>
<dbReference type="iPTMnet" id="Q91V98"/>
<dbReference type="PhosphoSitePlus" id="Q91V98"/>
<dbReference type="SwissPalm" id="Q91V98"/>
<dbReference type="CPTAC" id="non-CPTAC-3350"/>
<dbReference type="jPOST" id="Q91V98"/>
<dbReference type="PaxDb" id="10090-ENSMUSP00000070847"/>
<dbReference type="PeptideAtlas" id="Q91V98"/>
<dbReference type="ProteomicsDB" id="281349"/>
<dbReference type="Pumba" id="Q91V98"/>
<dbReference type="Antibodypedia" id="30126">
    <property type="antibodies" value="404 antibodies from 39 providers"/>
</dbReference>
<dbReference type="DNASU" id="70445"/>
<dbReference type="Ensembl" id="ENSMUST00000070630.8">
    <property type="protein sequence ID" value="ENSMUSP00000070847.7"/>
    <property type="gene ID" value="ENSMUSG00000056481.8"/>
</dbReference>
<dbReference type="GeneID" id="70445"/>
<dbReference type="KEGG" id="mmu:70445"/>
<dbReference type="UCSC" id="uc008gcb.1">
    <property type="organism name" value="mouse"/>
</dbReference>
<dbReference type="AGR" id="MGI:1917695"/>
<dbReference type="CTD" id="57124"/>
<dbReference type="MGI" id="MGI:1917695">
    <property type="gene designation" value="Cd248"/>
</dbReference>
<dbReference type="VEuPathDB" id="HostDB:ENSMUSG00000056481"/>
<dbReference type="eggNOG" id="ENOG502QQKI">
    <property type="taxonomic scope" value="Eukaryota"/>
</dbReference>
<dbReference type="GeneTree" id="ENSGT00940000162405"/>
<dbReference type="HOGENOM" id="CLU_027075_0_0_1"/>
<dbReference type="InParanoid" id="Q91V98"/>
<dbReference type="OMA" id="APNKRIT"/>
<dbReference type="OrthoDB" id="10045365at2759"/>
<dbReference type="PhylomeDB" id="Q91V98"/>
<dbReference type="TreeFam" id="TF330714"/>
<dbReference type="BioGRID-ORCS" id="70445">
    <property type="hits" value="5 hits in 77 CRISPR screens"/>
</dbReference>
<dbReference type="ChiTaRS" id="Cd248">
    <property type="organism name" value="mouse"/>
</dbReference>
<dbReference type="PRO" id="PR:Q91V98"/>
<dbReference type="Proteomes" id="UP000000589">
    <property type="component" value="Chromosome 19"/>
</dbReference>
<dbReference type="RNAct" id="Q91V98">
    <property type="molecule type" value="protein"/>
</dbReference>
<dbReference type="Bgee" id="ENSMUSG00000056481">
    <property type="expression patterns" value="Expressed in external carotid artery and 187 other cell types or tissues"/>
</dbReference>
<dbReference type="GO" id="GO:0005737">
    <property type="term" value="C:cytoplasm"/>
    <property type="evidence" value="ECO:0000314"/>
    <property type="project" value="MGI"/>
</dbReference>
<dbReference type="GO" id="GO:0005886">
    <property type="term" value="C:plasma membrane"/>
    <property type="evidence" value="ECO:0000266"/>
    <property type="project" value="MGI"/>
</dbReference>
<dbReference type="GO" id="GO:0005509">
    <property type="term" value="F:calcium ion binding"/>
    <property type="evidence" value="ECO:0007669"/>
    <property type="project" value="InterPro"/>
</dbReference>
<dbReference type="GO" id="GO:0030246">
    <property type="term" value="F:carbohydrate binding"/>
    <property type="evidence" value="ECO:0007669"/>
    <property type="project" value="UniProtKB-KW"/>
</dbReference>
<dbReference type="GO" id="GO:0050840">
    <property type="term" value="F:extracellular matrix binding"/>
    <property type="evidence" value="ECO:0000314"/>
    <property type="project" value="MGI"/>
</dbReference>
<dbReference type="GO" id="GO:0060033">
    <property type="term" value="P:anatomical structure regression"/>
    <property type="evidence" value="ECO:0000315"/>
    <property type="project" value="MGI"/>
</dbReference>
<dbReference type="GO" id="GO:0072577">
    <property type="term" value="P:endothelial cell apoptotic process"/>
    <property type="evidence" value="ECO:0000315"/>
    <property type="project" value="MGI"/>
</dbReference>
<dbReference type="GO" id="GO:0010761">
    <property type="term" value="P:fibroblast migration"/>
    <property type="evidence" value="ECO:0000315"/>
    <property type="project" value="MGI"/>
</dbReference>
<dbReference type="GO" id="GO:0048144">
    <property type="term" value="P:fibroblast proliferation"/>
    <property type="evidence" value="ECO:0000315"/>
    <property type="project" value="MGI"/>
</dbReference>
<dbReference type="GO" id="GO:0048535">
    <property type="term" value="P:lymph node development"/>
    <property type="evidence" value="ECO:0000315"/>
    <property type="project" value="MGI"/>
</dbReference>
<dbReference type="GO" id="GO:2000353">
    <property type="term" value="P:positive regulation of endothelial cell apoptotic process"/>
    <property type="evidence" value="ECO:0000315"/>
    <property type="project" value="MGI"/>
</dbReference>
<dbReference type="GO" id="GO:0048146">
    <property type="term" value="P:positive regulation of fibroblast proliferation"/>
    <property type="evidence" value="ECO:0000315"/>
    <property type="project" value="MGI"/>
</dbReference>
<dbReference type="CDD" id="cd03600">
    <property type="entry name" value="CLECT_thrombomodulin_like"/>
    <property type="match status" value="1"/>
</dbReference>
<dbReference type="CDD" id="cd00054">
    <property type="entry name" value="EGF_CA"/>
    <property type="match status" value="1"/>
</dbReference>
<dbReference type="FunFam" id="2.10.25.10:FF:000406">
    <property type="entry name" value="CD248 molecule"/>
    <property type="match status" value="1"/>
</dbReference>
<dbReference type="FunFam" id="2.10.25.10:FF:000489">
    <property type="entry name" value="CD248 molecule"/>
    <property type="match status" value="1"/>
</dbReference>
<dbReference type="FunFam" id="3.10.100.10:FF:000061">
    <property type="entry name" value="CD248 molecule"/>
    <property type="match status" value="1"/>
</dbReference>
<dbReference type="Gene3D" id="2.10.25.10">
    <property type="entry name" value="Laminin"/>
    <property type="match status" value="3"/>
</dbReference>
<dbReference type="Gene3D" id="3.10.100.10">
    <property type="entry name" value="Mannose-Binding Protein A, subunit A"/>
    <property type="match status" value="1"/>
</dbReference>
<dbReference type="InterPro" id="IPR001304">
    <property type="entry name" value="C-type_lectin-like"/>
</dbReference>
<dbReference type="InterPro" id="IPR016186">
    <property type="entry name" value="C-type_lectin-like/link_sf"/>
</dbReference>
<dbReference type="InterPro" id="IPR051505">
    <property type="entry name" value="C-type_lectin_domain"/>
</dbReference>
<dbReference type="InterPro" id="IPR016187">
    <property type="entry name" value="CTDL_fold"/>
</dbReference>
<dbReference type="InterPro" id="IPR001881">
    <property type="entry name" value="EGF-like_Ca-bd_dom"/>
</dbReference>
<dbReference type="InterPro" id="IPR000742">
    <property type="entry name" value="EGF-like_dom"/>
</dbReference>
<dbReference type="InterPro" id="IPR018097">
    <property type="entry name" value="EGF_Ca-bd_CS"/>
</dbReference>
<dbReference type="InterPro" id="IPR009030">
    <property type="entry name" value="Growth_fac_rcpt_cys_sf"/>
</dbReference>
<dbReference type="PANTHER" id="PTHR14789">
    <property type="entry name" value="CHONDROLECTIN VARIANT CHODLFDELTAE"/>
    <property type="match status" value="1"/>
</dbReference>
<dbReference type="PANTHER" id="PTHR14789:SF4">
    <property type="entry name" value="ENDOSIALIN"/>
    <property type="match status" value="1"/>
</dbReference>
<dbReference type="Pfam" id="PF14670">
    <property type="entry name" value="FXa_inhibition"/>
    <property type="match status" value="1"/>
</dbReference>
<dbReference type="Pfam" id="PF00059">
    <property type="entry name" value="Lectin_C"/>
    <property type="match status" value="1"/>
</dbReference>
<dbReference type="SMART" id="SM00034">
    <property type="entry name" value="CLECT"/>
    <property type="match status" value="1"/>
</dbReference>
<dbReference type="SMART" id="SM00181">
    <property type="entry name" value="EGF"/>
    <property type="match status" value="3"/>
</dbReference>
<dbReference type="SMART" id="SM00179">
    <property type="entry name" value="EGF_CA"/>
    <property type="match status" value="2"/>
</dbReference>
<dbReference type="SUPFAM" id="SSF56436">
    <property type="entry name" value="C-type lectin-like"/>
    <property type="match status" value="1"/>
</dbReference>
<dbReference type="SUPFAM" id="SSF57184">
    <property type="entry name" value="Growth factor receptor domain"/>
    <property type="match status" value="1"/>
</dbReference>
<dbReference type="PROSITE" id="PS50041">
    <property type="entry name" value="C_TYPE_LECTIN_2"/>
    <property type="match status" value="1"/>
</dbReference>
<dbReference type="PROSITE" id="PS01186">
    <property type="entry name" value="EGF_2"/>
    <property type="match status" value="1"/>
</dbReference>
<dbReference type="PROSITE" id="PS01187">
    <property type="entry name" value="EGF_CA"/>
    <property type="match status" value="1"/>
</dbReference>
<organism>
    <name type="scientific">Mus musculus</name>
    <name type="common">Mouse</name>
    <dbReference type="NCBI Taxonomy" id="10090"/>
    <lineage>
        <taxon>Eukaryota</taxon>
        <taxon>Metazoa</taxon>
        <taxon>Chordata</taxon>
        <taxon>Craniata</taxon>
        <taxon>Vertebrata</taxon>
        <taxon>Euteleostomi</taxon>
        <taxon>Mammalia</taxon>
        <taxon>Eutheria</taxon>
        <taxon>Euarchontoglires</taxon>
        <taxon>Glires</taxon>
        <taxon>Rodentia</taxon>
        <taxon>Myomorpha</taxon>
        <taxon>Muroidea</taxon>
        <taxon>Muridae</taxon>
        <taxon>Murinae</taxon>
        <taxon>Mus</taxon>
        <taxon>Mus</taxon>
    </lineage>
</organism>
<evidence type="ECO:0000250" key="1"/>
<evidence type="ECO:0000255" key="2"/>
<evidence type="ECO:0000255" key="3">
    <source>
        <dbReference type="PROSITE-ProRule" id="PRU00040"/>
    </source>
</evidence>
<evidence type="ECO:0000256" key="4">
    <source>
        <dbReference type="SAM" id="MobiDB-lite"/>
    </source>
</evidence>
<evidence type="ECO:0000269" key="5">
    <source>
    </source>
</evidence>
<evidence type="ECO:0000269" key="6">
    <source>
    </source>
</evidence>
<evidence type="ECO:0000269" key="7">
    <source>
    </source>
</evidence>
<evidence type="ECO:0000269" key="8">
    <source>
    </source>
</evidence>
<evidence type="ECO:0000269" key="9">
    <source>
    </source>
</evidence>
<evidence type="ECO:0000269" key="10">
    <source>
    </source>
</evidence>
<evidence type="ECO:0000305" key="11"/>
<evidence type="ECO:0007744" key="12">
    <source>
    </source>
</evidence>
<feature type="signal peptide" evidence="2">
    <location>
        <begin position="1"/>
        <end position="17"/>
    </location>
</feature>
<feature type="chain" id="PRO_0000045800" description="Endosialin">
    <location>
        <begin position="18"/>
        <end position="765"/>
    </location>
</feature>
<feature type="topological domain" description="Extracellular" evidence="2">
    <location>
        <begin position="18"/>
        <end position="695"/>
    </location>
</feature>
<feature type="transmembrane region" description="Helical" evidence="2">
    <location>
        <begin position="696"/>
        <end position="716"/>
    </location>
</feature>
<feature type="topological domain" description="Cytoplasmic" evidence="2">
    <location>
        <begin position="717"/>
        <end position="765"/>
    </location>
</feature>
<feature type="domain" description="C-type lectin" evidence="3">
    <location>
        <begin position="30"/>
        <end position="156"/>
    </location>
</feature>
<feature type="domain" description="Sushi">
    <location>
        <begin position="162"/>
        <end position="232"/>
    </location>
</feature>
<feature type="domain" description="EGF-like; calcium-binding" evidence="2">
    <location>
        <begin position="312"/>
        <end position="351"/>
    </location>
</feature>
<feature type="region of interest" description="Disordered" evidence="4">
    <location>
        <begin position="548"/>
        <end position="675"/>
    </location>
</feature>
<feature type="compositionally biased region" description="Pro residues" evidence="4">
    <location>
        <begin position="622"/>
        <end position="633"/>
    </location>
</feature>
<feature type="compositionally biased region" description="Polar residues" evidence="4">
    <location>
        <begin position="635"/>
        <end position="647"/>
    </location>
</feature>
<feature type="modified residue" description="Phosphoserine" evidence="12">
    <location>
        <position position="754"/>
    </location>
</feature>
<feature type="glycosylation site" description="O-linked (GalNAc...) threonine" evidence="2">
    <location>
        <position position="401"/>
    </location>
</feature>
<feature type="glycosylation site" description="O-linked (GalNAc...) threonine" evidence="2">
    <location>
        <position position="428"/>
    </location>
</feature>
<feature type="glycosylation site" description="O-linked (GalNAc...) threonine" evidence="2">
    <location>
        <position position="448"/>
    </location>
</feature>
<feature type="glycosylation site" description="O-linked (GalNAc...) threonine" evidence="2">
    <location>
        <position position="456"/>
    </location>
</feature>
<feature type="glycosylation site" description="O-linked (GalNAc...) threonine" evidence="2">
    <location>
        <position position="459"/>
    </location>
</feature>
<feature type="glycosylation site" description="O-linked (GalNAc...) threonine" evidence="2">
    <location>
        <position position="466"/>
    </location>
</feature>
<feature type="glycosylation site" description="O-linked (GalNAc...) serine" evidence="2">
    <location>
        <position position="467"/>
    </location>
</feature>
<feature type="glycosylation site" description="O-linked (GalNAc...) serine" evidence="2">
    <location>
        <position position="470"/>
    </location>
</feature>
<feature type="glycosylation site" description="O-linked (GalNAc...) threonine" evidence="2">
    <location>
        <position position="472"/>
    </location>
</feature>
<feature type="glycosylation site" description="O-linked (GalNAc...) serine" evidence="2">
    <location>
        <position position="477"/>
    </location>
</feature>
<feature type="glycosylation site" description="O-linked (GalNAc...) threonine" evidence="2">
    <location>
        <position position="488"/>
    </location>
</feature>
<feature type="glycosylation site" description="O-linked (GalNAc...) threonine" evidence="2">
    <location>
        <position position="517"/>
    </location>
</feature>
<feature type="glycosylation site" description="O-linked (GalNAc...) threonine" evidence="2">
    <location>
        <position position="520"/>
    </location>
</feature>
<feature type="glycosylation site" description="O-linked (GalNAc...) threonine" evidence="2">
    <location>
        <position position="535"/>
    </location>
</feature>
<feature type="glycosylation site" description="O-linked (GalNAc...) threonine" evidence="2">
    <location>
        <position position="552"/>
    </location>
</feature>
<feature type="glycosylation site" description="O-linked (GalNAc...) threonine" evidence="2">
    <location>
        <position position="554"/>
    </location>
</feature>
<feature type="glycosylation site" description="O-linked (GalNAc...) threonine" evidence="2">
    <location>
        <position position="556"/>
    </location>
</feature>
<feature type="glycosylation site" description="O-linked (GalNAc...) threonine" evidence="2">
    <location>
        <position position="570"/>
    </location>
</feature>
<feature type="glycosylation site" description="O-linked (GalNAc...) threonine" evidence="2">
    <location>
        <position position="571"/>
    </location>
</feature>
<feature type="glycosylation site" description="O-linked (GalNAc...) threonine" evidence="2">
    <location>
        <position position="604"/>
    </location>
</feature>
<feature type="glycosylation site" description="O-linked (GalNAc...) threonine" evidence="2">
    <location>
        <position position="613"/>
    </location>
</feature>
<feature type="glycosylation site" description="O-linked (GalNAc...) serine" evidence="2">
    <location>
        <position position="626"/>
    </location>
</feature>
<feature type="glycosylation site" description="O-linked (GalNAc...) serine" evidence="2">
    <location>
        <position position="627"/>
    </location>
</feature>
<feature type="glycosylation site" description="O-linked (GalNAc...) threonine" evidence="2">
    <location>
        <position position="635"/>
    </location>
</feature>
<feature type="glycosylation site" description="O-linked (GalNAc...) threonine" evidence="2">
    <location>
        <position position="638"/>
    </location>
</feature>
<feature type="glycosylation site" description="O-linked (GalNAc...) serine" evidence="2">
    <location>
        <position position="639"/>
    </location>
</feature>
<feature type="glycosylation site" description="O-linked (GalNAc...) serine" evidence="2">
    <location>
        <position position="640"/>
    </location>
</feature>
<feature type="glycosylation site" description="O-linked (GalNAc...) threonine" evidence="2">
    <location>
        <position position="644"/>
    </location>
</feature>
<feature type="glycosylation site" description="O-linked (GalNAc...) serine" evidence="2">
    <location>
        <position position="663"/>
    </location>
</feature>
<feature type="glycosylation site" description="O-linked (GalNAc...) threonine" evidence="2">
    <location>
        <position position="673"/>
    </location>
</feature>
<feature type="disulfide bond" evidence="3">
    <location>
        <begin position="131"/>
        <end position="147"/>
    </location>
</feature>
<feature type="disulfide bond" evidence="3">
    <location>
        <begin position="164"/>
        <end position="213"/>
    </location>
</feature>
<feature type="disulfide bond" evidence="3">
    <location>
        <begin position="203"/>
        <end position="230"/>
    </location>
</feature>
<feature type="disulfide bond" evidence="3">
    <location>
        <begin position="316"/>
        <end position="326"/>
    </location>
</feature>
<feature type="disulfide bond" evidence="3">
    <location>
        <begin position="322"/>
        <end position="335"/>
    </location>
</feature>
<feature type="disulfide bond" evidence="3">
    <location>
        <begin position="337"/>
        <end position="350"/>
    </location>
</feature>
<feature type="sequence conflict" description="In Ref. 2; AAK84664." evidence="11" ref="2">
    <original>S</original>
    <variation>P</variation>
    <location>
        <position position="525"/>
    </location>
</feature>
<feature type="sequence conflict" description="In Ref. 3; BAE25992." evidence="11" ref="3">
    <original>P</original>
    <variation>T</variation>
    <location>
        <position position="751"/>
    </location>
</feature>
<accession>Q91V98</accession>
<accession>Q3UMV6</accession>
<accession>Q91ZV1</accession>
<reference key="1">
    <citation type="journal article" date="2001" name="Cancer Res.">
        <title>Cell surface tumor endothelial markers are conserved in mice and humans.</title>
        <authorList>
            <person name="Carson-Walter E.B."/>
            <person name="Watkins D.N."/>
            <person name="Nanda A."/>
            <person name="Vogelstein B."/>
            <person name="Kinzler K.W."/>
            <person name="St Croix B."/>
        </authorList>
    </citation>
    <scope>NUCLEOTIDE SEQUENCE [MRNA]</scope>
</reference>
<reference key="2">
    <citation type="journal article" date="2001" name="J. Biol. Chem.">
        <title>Molecular characterization of the mouse Tem1/endosialin gene regulated by cell density in vitro and expressed in normal tissues in vivo.</title>
        <authorList>
            <person name="Opavsky R."/>
            <person name="Haviernik P."/>
            <person name="Jurkovicova D."/>
            <person name="Garin M.T."/>
            <person name="Copeland N.G."/>
            <person name="Gilbert D.J."/>
            <person name="Jenkins N.A."/>
            <person name="Bies J."/>
            <person name="Garfield S."/>
            <person name="Pastorekova S."/>
            <person name="Oue A."/>
            <person name="Wolff L."/>
        </authorList>
    </citation>
    <scope>NUCLEOTIDE SEQUENCE [GENOMIC DNA / MRNA]</scope>
    <scope>DEVELOPMENTAL STAGE</scope>
    <scope>TISSUE SPECIFICITY</scope>
    <scope>FUNCTION</scope>
    <source>
        <strain>129S6/SvEvTac</strain>
        <tissue>Spleen</tissue>
        <tissue>Thymus</tissue>
    </source>
</reference>
<reference key="3">
    <citation type="journal article" date="2005" name="Science">
        <title>The transcriptional landscape of the mammalian genome.</title>
        <authorList>
            <person name="Carninci P."/>
            <person name="Kasukawa T."/>
            <person name="Katayama S."/>
            <person name="Gough J."/>
            <person name="Frith M.C."/>
            <person name="Maeda N."/>
            <person name="Oyama R."/>
            <person name="Ravasi T."/>
            <person name="Lenhard B."/>
            <person name="Wells C."/>
            <person name="Kodzius R."/>
            <person name="Shimokawa K."/>
            <person name="Bajic V.B."/>
            <person name="Brenner S.E."/>
            <person name="Batalov S."/>
            <person name="Forrest A.R."/>
            <person name="Zavolan M."/>
            <person name="Davis M.J."/>
            <person name="Wilming L.G."/>
            <person name="Aidinis V."/>
            <person name="Allen J.E."/>
            <person name="Ambesi-Impiombato A."/>
            <person name="Apweiler R."/>
            <person name="Aturaliya R.N."/>
            <person name="Bailey T.L."/>
            <person name="Bansal M."/>
            <person name="Baxter L."/>
            <person name="Beisel K.W."/>
            <person name="Bersano T."/>
            <person name="Bono H."/>
            <person name="Chalk A.M."/>
            <person name="Chiu K.P."/>
            <person name="Choudhary V."/>
            <person name="Christoffels A."/>
            <person name="Clutterbuck D.R."/>
            <person name="Crowe M.L."/>
            <person name="Dalla E."/>
            <person name="Dalrymple B.P."/>
            <person name="de Bono B."/>
            <person name="Della Gatta G."/>
            <person name="di Bernardo D."/>
            <person name="Down T."/>
            <person name="Engstrom P."/>
            <person name="Fagiolini M."/>
            <person name="Faulkner G."/>
            <person name="Fletcher C.F."/>
            <person name="Fukushima T."/>
            <person name="Furuno M."/>
            <person name="Futaki S."/>
            <person name="Gariboldi M."/>
            <person name="Georgii-Hemming P."/>
            <person name="Gingeras T.R."/>
            <person name="Gojobori T."/>
            <person name="Green R.E."/>
            <person name="Gustincich S."/>
            <person name="Harbers M."/>
            <person name="Hayashi Y."/>
            <person name="Hensch T.K."/>
            <person name="Hirokawa N."/>
            <person name="Hill D."/>
            <person name="Huminiecki L."/>
            <person name="Iacono M."/>
            <person name="Ikeo K."/>
            <person name="Iwama A."/>
            <person name="Ishikawa T."/>
            <person name="Jakt M."/>
            <person name="Kanapin A."/>
            <person name="Katoh M."/>
            <person name="Kawasawa Y."/>
            <person name="Kelso J."/>
            <person name="Kitamura H."/>
            <person name="Kitano H."/>
            <person name="Kollias G."/>
            <person name="Krishnan S.P."/>
            <person name="Kruger A."/>
            <person name="Kummerfeld S.K."/>
            <person name="Kurochkin I.V."/>
            <person name="Lareau L.F."/>
            <person name="Lazarevic D."/>
            <person name="Lipovich L."/>
            <person name="Liu J."/>
            <person name="Liuni S."/>
            <person name="McWilliam S."/>
            <person name="Madan Babu M."/>
            <person name="Madera M."/>
            <person name="Marchionni L."/>
            <person name="Matsuda H."/>
            <person name="Matsuzawa S."/>
            <person name="Miki H."/>
            <person name="Mignone F."/>
            <person name="Miyake S."/>
            <person name="Morris K."/>
            <person name="Mottagui-Tabar S."/>
            <person name="Mulder N."/>
            <person name="Nakano N."/>
            <person name="Nakauchi H."/>
            <person name="Ng P."/>
            <person name="Nilsson R."/>
            <person name="Nishiguchi S."/>
            <person name="Nishikawa S."/>
            <person name="Nori F."/>
            <person name="Ohara O."/>
            <person name="Okazaki Y."/>
            <person name="Orlando V."/>
            <person name="Pang K.C."/>
            <person name="Pavan W.J."/>
            <person name="Pavesi G."/>
            <person name="Pesole G."/>
            <person name="Petrovsky N."/>
            <person name="Piazza S."/>
            <person name="Reed J."/>
            <person name="Reid J.F."/>
            <person name="Ring B.Z."/>
            <person name="Ringwald M."/>
            <person name="Rost B."/>
            <person name="Ruan Y."/>
            <person name="Salzberg S.L."/>
            <person name="Sandelin A."/>
            <person name="Schneider C."/>
            <person name="Schoenbach C."/>
            <person name="Sekiguchi K."/>
            <person name="Semple C.A."/>
            <person name="Seno S."/>
            <person name="Sessa L."/>
            <person name="Sheng Y."/>
            <person name="Shibata Y."/>
            <person name="Shimada H."/>
            <person name="Shimada K."/>
            <person name="Silva D."/>
            <person name="Sinclair B."/>
            <person name="Sperling S."/>
            <person name="Stupka E."/>
            <person name="Sugiura K."/>
            <person name="Sultana R."/>
            <person name="Takenaka Y."/>
            <person name="Taki K."/>
            <person name="Tammoja K."/>
            <person name="Tan S.L."/>
            <person name="Tang S."/>
            <person name="Taylor M.S."/>
            <person name="Tegner J."/>
            <person name="Teichmann S.A."/>
            <person name="Ueda H.R."/>
            <person name="van Nimwegen E."/>
            <person name="Verardo R."/>
            <person name="Wei C.L."/>
            <person name="Yagi K."/>
            <person name="Yamanishi H."/>
            <person name="Zabarovsky E."/>
            <person name="Zhu S."/>
            <person name="Zimmer A."/>
            <person name="Hide W."/>
            <person name="Bult C."/>
            <person name="Grimmond S.M."/>
            <person name="Teasdale R.D."/>
            <person name="Liu E.T."/>
            <person name="Brusic V."/>
            <person name="Quackenbush J."/>
            <person name="Wahlestedt C."/>
            <person name="Mattick J.S."/>
            <person name="Hume D.A."/>
            <person name="Kai C."/>
            <person name="Sasaki D."/>
            <person name="Tomaru Y."/>
            <person name="Fukuda S."/>
            <person name="Kanamori-Katayama M."/>
            <person name="Suzuki M."/>
            <person name="Aoki J."/>
            <person name="Arakawa T."/>
            <person name="Iida J."/>
            <person name="Imamura K."/>
            <person name="Itoh M."/>
            <person name="Kato T."/>
            <person name="Kawaji H."/>
            <person name="Kawagashira N."/>
            <person name="Kawashima T."/>
            <person name="Kojima M."/>
            <person name="Kondo S."/>
            <person name="Konno H."/>
            <person name="Nakano K."/>
            <person name="Ninomiya N."/>
            <person name="Nishio T."/>
            <person name="Okada M."/>
            <person name="Plessy C."/>
            <person name="Shibata K."/>
            <person name="Shiraki T."/>
            <person name="Suzuki S."/>
            <person name="Tagami M."/>
            <person name="Waki K."/>
            <person name="Watahiki A."/>
            <person name="Okamura-Oho Y."/>
            <person name="Suzuki H."/>
            <person name="Kawai J."/>
            <person name="Hayashizaki Y."/>
        </authorList>
    </citation>
    <scope>NUCLEOTIDE SEQUENCE [LARGE SCALE MRNA]</scope>
    <source>
        <tissue>Lung</tissue>
    </source>
</reference>
<reference key="4">
    <citation type="journal article" date="2004" name="Genome Res.">
        <title>The status, quality, and expansion of the NIH full-length cDNA project: the Mammalian Gene Collection (MGC).</title>
        <authorList>
            <consortium name="The MGC Project Team"/>
        </authorList>
    </citation>
    <scope>NUCLEOTIDE SEQUENCE [LARGE SCALE MRNA]</scope>
    <source>
        <tissue>Olfactory epithelium</tissue>
    </source>
</reference>
<reference key="5">
    <citation type="journal article" date="2010" name="Cell">
        <title>A tissue-specific atlas of mouse protein phosphorylation and expression.</title>
        <authorList>
            <person name="Huttlin E.L."/>
            <person name="Jedrychowski M.P."/>
            <person name="Elias J.E."/>
            <person name="Goswami T."/>
            <person name="Rad R."/>
            <person name="Beausoleil S.A."/>
            <person name="Villen J."/>
            <person name="Haas W."/>
            <person name="Sowa M.E."/>
            <person name="Gygi S.P."/>
        </authorList>
    </citation>
    <scope>PHOSPHORYLATION [LARGE SCALE ANALYSIS] AT SER-754</scope>
    <scope>IDENTIFICATION BY MASS SPECTROMETRY [LARGE SCALE ANALYSIS]</scope>
    <source>
        <tissue>Kidney</tissue>
        <tissue>Lung</tissue>
    </source>
</reference>
<reference key="6">
    <citation type="journal article" date="2014" name="PLoS ONE">
        <title>A differential role for CD248 (Endosialin) in PDGF-mediated skeletal muscle angiogenesis.</title>
        <authorList>
            <person name="Naylor A.J."/>
            <person name="McGettrick H.M."/>
            <person name="Maynard W.D."/>
            <person name="May P."/>
            <person name="Barone F."/>
            <person name="Croft A.P."/>
            <person name="Egginton S."/>
            <person name="Buckley C.D."/>
        </authorList>
    </citation>
    <scope>FUNCTION IN ANGIOGENESIS</scope>
    <scope>DISRUPTION PHENOTYPE</scope>
    <scope>TISSUE SPECIFICITY</scope>
</reference>
<reference key="7">
    <citation type="journal article" date="2019" name="J. Invest. Dermatol.">
        <title>Tumor Endothelial Marker 1 (TEM1/Endosialin/CD248) Enhances Wound Healing by Interacting with Platelet-Derived Growth Factor Receptors.</title>
        <authorList>
            <person name="Hong Y.K."/>
            <person name="Lee Y.C."/>
            <person name="Cheng T.L."/>
            <person name="Lai C.H."/>
            <person name="Hsu C.K."/>
            <person name="Kuo C.H."/>
            <person name="Hsu Y.Y."/>
            <person name="Li J.T."/>
            <person name="Chang B.I."/>
            <person name="Ma C.Y."/>
            <person name="Lin S.W."/>
            <person name="Wang K.C."/>
            <person name="Shi G.Y."/>
            <person name="Wu H.L."/>
        </authorList>
    </citation>
    <scope>FUNCTION</scope>
    <scope>DISRUPTION PHENOTYPE</scope>
    <scope>INTERACTION WITH PDGFRA</scope>
    <scope>INDUCTION BY GRANULATION TISSUE AFTER WOUNDING</scope>
</reference>
<reference key="8">
    <citation type="journal article" date="2021" name="J. Thromb. Haemost.">
        <title>CD248 enhances tissue factor procoagulant function, promoting arterial and venous thrombosis in mouse models.</title>
        <authorList>
            <person name="Kapopara P.R."/>
            <person name="Safikhan N.S."/>
            <person name="Huang J.L."/>
            <person name="Meixner S.C."/>
            <person name="Gonzalez K."/>
            <person name="Loghmani H."/>
            <person name="Ruf W."/>
            <person name="Mast A.E."/>
            <person name="Lei V."/>
            <person name="Pryzdial E.L.G."/>
            <person name="Conway E.M."/>
        </authorList>
    </citation>
    <scope>FUNCTION</scope>
</reference>
<reference key="9">
    <citation type="journal article" date="2021" name="Transl. Res.">
        <title>Role of tumor endothelial marker 1 (Endosialin/CD248) lectin-like domain in lipopolysaccharide-induced macrophage activation and sepsis in mice.</title>
        <authorList>
            <person name="Cheng T.L."/>
            <person name="Lin Y.S."/>
            <person name="Hong Y.K."/>
            <person name="Ma C.Y."/>
            <person name="Tsai H.W."/>
            <person name="Shi G.Y."/>
            <person name="Wu H.L."/>
            <person name="Lai C.H."/>
        </authorList>
    </citation>
    <scope>FUNCTION</scope>
</reference>
<reference key="10">
    <citation type="journal article" date="2024" name="EBioMedicine">
        <title>CD248 promotes insulin resistance by binding to the insulin receptor and dampening its insulin-induced autophosphorylation.</title>
        <authorList>
            <person name="Benedet P.O."/>
            <person name="Safikhan N.S."/>
            <person name="Pereira M.J."/>
            <person name="Lum B.M."/>
            <person name="Botezelli J.D."/>
            <person name="Kuo C.H."/>
            <person name="Wu H.L."/>
            <person name="Craddock B.P."/>
            <person name="Miller W.T."/>
            <person name="Eriksson J.W."/>
            <person name="Yue J.T.Y."/>
            <person name="Conway E.M."/>
        </authorList>
    </citation>
    <scope>FUNCTION</scope>
    <scope>DISRUPTION PHENOTYPE</scope>
    <scope>INTERACTION WITH INSR AND INTEGRIN BETA-1/ITGB1</scope>
</reference>
<comment type="function">
    <text evidence="5 6 7 8 9 10">Cell surface glycoprotein involved in various biological processes including angiogenesis, immune response modulation, and tissue remodeling and repair (PubMed:11489895, PubMed:25243742, PubMed:38061240). Participates in pericyte proliferation through positive modulation of the PDGF receptor signaling pathway (PubMed:30986375). Acts as a scaffold for factor X, triggering allosteric changes and the spatial re-alignment of factor X with the TF-factor VIIa complex, thereby enhancing coagulation activation (PubMed:33830628). Modulates the insulin signaling pathway by interacting with insulin receptor/INSR and by diminishing its capacity to be autophosphorylated in response to insulin (PubMed:38061240). Also regulates LPS-induced inflammatory responses in macrophages by favoring production of proinflammatory cytokines (PubMed:33737161).</text>
</comment>
<comment type="subunit">
    <text evidence="7 10">Interacts with PDGFRA; this interaction promotes PDGF receptor signaling pathway (PubMed:30986375). Interacts with integrin beta-1/ITGB1 (PubMed:38061240). Interacts with insulin receptor/INSR; this interaction diminishes INSR autophosphorylation (PubMed:38061240).</text>
</comment>
<comment type="subcellular location">
    <subcellularLocation>
        <location evidence="11">Membrane</location>
        <topology evidence="11">Single-pass type I membrane protein</topology>
    </subcellularLocation>
</comment>
<comment type="tissue specificity">
    <text evidence="5 6">Expressed in cell lines derived from endothelial cells, embryonic fibroblasts and preadipocytes (PubMed:11489895). Expressed in skeletal muscle by a subset of pericytes (PubMed:25243742).</text>
</comment>
<comment type="developmental stage">
    <text evidence="5">Detected at 19 dpc in embryo.</text>
</comment>
<comment type="induction">
    <text evidence="7">By wounds.</text>
</comment>
<comment type="PTM">
    <text evidence="1">O-glycosylated by sialylated oligosaccharides.</text>
</comment>
<comment type="PTM">
    <text evidence="1">May be N-glycosylated.</text>
</comment>
<comment type="disruption phenotype">
    <text evidence="6 7 10">Cd248 deletion mice display a delay in wound healing. The show reduced activation, proliferation, and collagen deposition of fibroblasts in the granulation tissues of wound (PubMed:30986375). They are also unable to mount a sprouting angiogenic response to muscle overload (PubMed:25243742). Genetic deletion of CD248 in mice, overcame diet-induced insulin resistance with improvements in glucose uptake and lipolysis in white adipose tissue depots (PubMed:38061240).</text>
</comment>
<sequence>MLLRLLLAWVAAVPALGQVPWTPEPRAACGPSSCYALFPRRRTFLEAWRACRELGGNLATPRTPEEAQRVDSLVGVGPANGLLWIGLQRQARQCQPQRPLRGFIWTTGDQDTAFTNWAQPATEGPCPAQRCAALEASGEHRWLEGSCTLAVDGYLCQFGFEGACPALPLEVGQAGPAVYTTPFNLVSSEFEWLPFGSVAAVQCQAGRGASLLCVKQPSGGVGWSQTGPLCPGTGCGPDNGGCEHECVEEVDGAVSCRCSEGFRLAADGHSCEDPCAQAPCEQQCEPGGPQGYSCHCRLGFRPAEDDPHRCVDTDECQIAGVCQQMCVNYVGGFECYCSEGHELEADGISCSPAGAMGAQASQDLRDELLDDGEEGEDEEEPWEDFDGTWTEEQGILWLAPTHPPDFGLPYRPNFPQDGEPQRLHLEPTWPPPLSAPRGPYHSSVVSATRPMVISATRPTLPSAHKTSVISATRPPLSPVHPPAMAPATPPAVFSEHQIPKIKANYPDLPFGHKPGITSATHPARSPPYQPPIISTNYPQVFPPHQAPMSPDTHTITYLPPVPPHLDPGDTTSKAHQHPLLPDAPGIRTQAPQLSVSALQPPLPTNSRSSVHETPVPAANQPPAFPSSPLPPQRPTNQTSSISPTHSYSRAPLVPREGVPSPKSVPQLPSVPSTAAPTALAESGLAGQSQRDDRWLLVALLVPTCVFLVVLLALGIVYCTRCGSHAPNKRITDCYRWVTHAGNKSSTEPMPPRGSLTGVQTCRTSV</sequence>
<gene>
    <name type="primary">Cd248</name>
    <name type="synonym">Tem1</name>
</gene>
<name>CD248_MOUSE</name>
<keyword id="KW-0106">Calcium</keyword>
<keyword id="KW-1015">Disulfide bond</keyword>
<keyword id="KW-0245">EGF-like domain</keyword>
<keyword id="KW-0325">Glycoprotein</keyword>
<keyword id="KW-0430">Lectin</keyword>
<keyword id="KW-0472">Membrane</keyword>
<keyword id="KW-0597">Phosphoprotein</keyword>
<keyword id="KW-1185">Reference proteome</keyword>
<keyword id="KW-0732">Signal</keyword>
<keyword id="KW-0812">Transmembrane</keyword>
<keyword id="KW-1133">Transmembrane helix</keyword>
<proteinExistence type="evidence at protein level"/>
<protein>
    <recommendedName>
        <fullName>Endosialin</fullName>
    </recommendedName>
    <alternativeName>
        <fullName>Tumor endothelial marker 1</fullName>
    </alternativeName>
    <cdAntigenName>CD248</cdAntigenName>
</protein>